<geneLocation type="chloroplast"/>
<evidence type="ECO:0000250" key="1"/>
<evidence type="ECO:0000255" key="2">
    <source>
        <dbReference type="HAMAP-Rule" id="MF_01303"/>
    </source>
</evidence>
<comment type="function">
    <text evidence="2">Apoprotein for the two 4Fe-4S centers FA and FB of photosystem I (PSI); essential for photochemical activity. FB is the terminal electron acceptor of PSI, donating electrons to ferredoxin. The C-terminus interacts with PsaA/B/D and helps assemble the protein into the PSI complex. Required for binding of PsaD and PsaE to PSI. PSI is a plastocyanin-ferredoxin oxidoreductase, converting photonic excitation into a charge separation, which transfers an electron from the donor P700 chlorophyll pair to the spectroscopically characterized acceptors A0, A1, FX, FA and FB in turn.</text>
</comment>
<comment type="catalytic activity">
    <reaction evidence="2">
        <text>reduced [plastocyanin] + hnu + oxidized [2Fe-2S]-[ferredoxin] = oxidized [plastocyanin] + reduced [2Fe-2S]-[ferredoxin]</text>
        <dbReference type="Rhea" id="RHEA:30407"/>
        <dbReference type="Rhea" id="RHEA-COMP:10000"/>
        <dbReference type="Rhea" id="RHEA-COMP:10001"/>
        <dbReference type="Rhea" id="RHEA-COMP:10039"/>
        <dbReference type="Rhea" id="RHEA-COMP:10040"/>
        <dbReference type="ChEBI" id="CHEBI:29036"/>
        <dbReference type="ChEBI" id="CHEBI:30212"/>
        <dbReference type="ChEBI" id="CHEBI:33737"/>
        <dbReference type="ChEBI" id="CHEBI:33738"/>
        <dbReference type="ChEBI" id="CHEBI:49552"/>
        <dbReference type="EC" id="1.97.1.12"/>
    </reaction>
</comment>
<comment type="cofactor">
    <cofactor evidence="2">
        <name>[4Fe-4S] cluster</name>
        <dbReference type="ChEBI" id="CHEBI:49883"/>
    </cofactor>
    <text evidence="2">Binds 2 [4Fe-4S] clusters. Cluster 2 is most probably the spectroscopically characterized electron acceptor FA and cluster 1 is most probably FB.</text>
</comment>
<comment type="subunit">
    <text evidence="2">The eukaryotic PSI reaction center is composed of at least 11 subunits.</text>
</comment>
<comment type="subcellular location">
    <subcellularLocation>
        <location evidence="2">Plastid</location>
        <location evidence="2">Chloroplast thylakoid membrane</location>
        <topology evidence="2">Peripheral membrane protein</topology>
        <orientation evidence="2">Stromal side</orientation>
    </subcellularLocation>
</comment>
<accession>Q06FQ3</accession>
<reference key="1">
    <citation type="journal article" date="2006" name="Mol. Biol. Evol.">
        <title>The complete chloroplast genome sequence of Pelargonium x hortorum: organization and evolution of the largest and most highly rearranged chloroplast genome of land plants.</title>
        <authorList>
            <person name="Chumley T.W."/>
            <person name="Palmer J.D."/>
            <person name="Mower J.P."/>
            <person name="Fourcade H.M."/>
            <person name="Calie P.J."/>
            <person name="Boore J.L."/>
            <person name="Jansen R.K."/>
        </authorList>
    </citation>
    <scope>NUCLEOTIDE SEQUENCE [LARGE SCALE GENOMIC DNA]</scope>
    <source>
        <strain>cv. Ringo White</strain>
    </source>
</reference>
<proteinExistence type="inferred from homology"/>
<organism>
    <name type="scientific">Pelargonium hortorum</name>
    <name type="common">Common geranium</name>
    <name type="synonym">Pelargonium inquinans x Pelargonium zonale</name>
    <dbReference type="NCBI Taxonomy" id="4031"/>
    <lineage>
        <taxon>Eukaryota</taxon>
        <taxon>Viridiplantae</taxon>
        <taxon>Streptophyta</taxon>
        <taxon>Embryophyta</taxon>
        <taxon>Tracheophyta</taxon>
        <taxon>Spermatophyta</taxon>
        <taxon>Magnoliopsida</taxon>
        <taxon>eudicotyledons</taxon>
        <taxon>Gunneridae</taxon>
        <taxon>Pentapetalae</taxon>
        <taxon>rosids</taxon>
        <taxon>malvids</taxon>
        <taxon>Geraniales</taxon>
        <taxon>Geraniaceae</taxon>
        <taxon>Pelargonium</taxon>
    </lineage>
</organism>
<sequence length="81" mass="9038">MSHSVKIYDTCIGCTQCVRACPTDVLEMIPWDGCKAKQIASAPRTEDCVGCKRCESACPTDFLSVRVYLWHETTRSMGLAY</sequence>
<feature type="initiator methionine" description="Removed" evidence="1">
    <location>
        <position position="1"/>
    </location>
</feature>
<feature type="chain" id="PRO_0000275993" description="Photosystem I iron-sulfur center">
    <location>
        <begin position="2"/>
        <end position="81"/>
    </location>
</feature>
<feature type="domain" description="4Fe-4S ferredoxin-type 1" evidence="2">
    <location>
        <begin position="2"/>
        <end position="31"/>
    </location>
</feature>
<feature type="domain" description="4Fe-4S ferredoxin-type 2" evidence="2">
    <location>
        <begin position="39"/>
        <end position="68"/>
    </location>
</feature>
<feature type="binding site" evidence="2">
    <location>
        <position position="11"/>
    </location>
    <ligand>
        <name>[4Fe-4S] cluster</name>
        <dbReference type="ChEBI" id="CHEBI:49883"/>
        <label>1</label>
    </ligand>
</feature>
<feature type="binding site" evidence="2">
    <location>
        <position position="14"/>
    </location>
    <ligand>
        <name>[4Fe-4S] cluster</name>
        <dbReference type="ChEBI" id="CHEBI:49883"/>
        <label>1</label>
    </ligand>
</feature>
<feature type="binding site" evidence="2">
    <location>
        <position position="17"/>
    </location>
    <ligand>
        <name>[4Fe-4S] cluster</name>
        <dbReference type="ChEBI" id="CHEBI:49883"/>
        <label>1</label>
    </ligand>
</feature>
<feature type="binding site" evidence="2">
    <location>
        <position position="21"/>
    </location>
    <ligand>
        <name>[4Fe-4S] cluster</name>
        <dbReference type="ChEBI" id="CHEBI:49883"/>
        <label>2</label>
    </ligand>
</feature>
<feature type="binding site" evidence="2">
    <location>
        <position position="48"/>
    </location>
    <ligand>
        <name>[4Fe-4S] cluster</name>
        <dbReference type="ChEBI" id="CHEBI:49883"/>
        <label>2</label>
    </ligand>
</feature>
<feature type="binding site" evidence="2">
    <location>
        <position position="51"/>
    </location>
    <ligand>
        <name>[4Fe-4S] cluster</name>
        <dbReference type="ChEBI" id="CHEBI:49883"/>
        <label>2</label>
    </ligand>
</feature>
<feature type="binding site" evidence="2">
    <location>
        <position position="54"/>
    </location>
    <ligand>
        <name>[4Fe-4S] cluster</name>
        <dbReference type="ChEBI" id="CHEBI:49883"/>
        <label>2</label>
    </ligand>
</feature>
<feature type="binding site" evidence="2">
    <location>
        <position position="58"/>
    </location>
    <ligand>
        <name>[4Fe-4S] cluster</name>
        <dbReference type="ChEBI" id="CHEBI:49883"/>
        <label>1</label>
    </ligand>
</feature>
<protein>
    <recommendedName>
        <fullName evidence="2">Photosystem I iron-sulfur center</fullName>
        <ecNumber evidence="2">1.97.1.12</ecNumber>
    </recommendedName>
    <alternativeName>
        <fullName evidence="2">9 kDa polypeptide</fullName>
    </alternativeName>
    <alternativeName>
        <fullName evidence="2">PSI-C</fullName>
    </alternativeName>
    <alternativeName>
        <fullName evidence="2">Photosystem I subunit VII</fullName>
    </alternativeName>
    <alternativeName>
        <fullName evidence="2">PsaC</fullName>
    </alternativeName>
</protein>
<keyword id="KW-0004">4Fe-4S</keyword>
<keyword id="KW-0150">Chloroplast</keyword>
<keyword id="KW-0249">Electron transport</keyword>
<keyword id="KW-0408">Iron</keyword>
<keyword id="KW-0411">Iron-sulfur</keyword>
<keyword id="KW-0472">Membrane</keyword>
<keyword id="KW-0479">Metal-binding</keyword>
<keyword id="KW-0560">Oxidoreductase</keyword>
<keyword id="KW-0602">Photosynthesis</keyword>
<keyword id="KW-0603">Photosystem I</keyword>
<keyword id="KW-0934">Plastid</keyword>
<keyword id="KW-0677">Repeat</keyword>
<keyword id="KW-0793">Thylakoid</keyword>
<keyword id="KW-0813">Transport</keyword>
<name>PSAC_PELHO</name>
<dbReference type="EC" id="1.97.1.12" evidence="2"/>
<dbReference type="EMBL" id="DQ897681">
    <property type="protein sequence ID" value="ABI17319.1"/>
    <property type="molecule type" value="Genomic_DNA"/>
</dbReference>
<dbReference type="RefSeq" id="YP_784128.1">
    <property type="nucleotide sequence ID" value="NC_008454.1"/>
</dbReference>
<dbReference type="SMR" id="Q06FQ3"/>
<dbReference type="GeneID" id="4362881"/>
<dbReference type="GO" id="GO:0009535">
    <property type="term" value="C:chloroplast thylakoid membrane"/>
    <property type="evidence" value="ECO:0007669"/>
    <property type="project" value="UniProtKB-SubCell"/>
</dbReference>
<dbReference type="GO" id="GO:0009522">
    <property type="term" value="C:photosystem I"/>
    <property type="evidence" value="ECO:0007669"/>
    <property type="project" value="UniProtKB-KW"/>
</dbReference>
<dbReference type="GO" id="GO:0051539">
    <property type="term" value="F:4 iron, 4 sulfur cluster binding"/>
    <property type="evidence" value="ECO:0007669"/>
    <property type="project" value="UniProtKB-KW"/>
</dbReference>
<dbReference type="GO" id="GO:0009055">
    <property type="term" value="F:electron transfer activity"/>
    <property type="evidence" value="ECO:0007669"/>
    <property type="project" value="UniProtKB-UniRule"/>
</dbReference>
<dbReference type="GO" id="GO:0046872">
    <property type="term" value="F:metal ion binding"/>
    <property type="evidence" value="ECO:0007669"/>
    <property type="project" value="UniProtKB-KW"/>
</dbReference>
<dbReference type="GO" id="GO:0016491">
    <property type="term" value="F:oxidoreductase activity"/>
    <property type="evidence" value="ECO:0007669"/>
    <property type="project" value="UniProtKB-KW"/>
</dbReference>
<dbReference type="GO" id="GO:0009773">
    <property type="term" value="P:photosynthetic electron transport in photosystem I"/>
    <property type="evidence" value="ECO:0007669"/>
    <property type="project" value="InterPro"/>
</dbReference>
<dbReference type="FunFam" id="3.30.70.20:FF:000001">
    <property type="entry name" value="Photosystem I iron-sulfur center"/>
    <property type="match status" value="1"/>
</dbReference>
<dbReference type="Gene3D" id="3.30.70.20">
    <property type="match status" value="1"/>
</dbReference>
<dbReference type="HAMAP" id="MF_01303">
    <property type="entry name" value="PSI_PsaC"/>
    <property type="match status" value="1"/>
</dbReference>
<dbReference type="InterPro" id="IPR017896">
    <property type="entry name" value="4Fe4S_Fe-S-bd"/>
</dbReference>
<dbReference type="InterPro" id="IPR017900">
    <property type="entry name" value="4Fe4S_Fe_S_CS"/>
</dbReference>
<dbReference type="InterPro" id="IPR050157">
    <property type="entry name" value="PSI_iron-sulfur_center"/>
</dbReference>
<dbReference type="InterPro" id="IPR017491">
    <property type="entry name" value="PSI_PsaC"/>
</dbReference>
<dbReference type="NCBIfam" id="TIGR03048">
    <property type="entry name" value="PS_I_psaC"/>
    <property type="match status" value="1"/>
</dbReference>
<dbReference type="PANTHER" id="PTHR24960:SF79">
    <property type="entry name" value="PHOTOSYSTEM I IRON-SULFUR CENTER"/>
    <property type="match status" value="1"/>
</dbReference>
<dbReference type="PANTHER" id="PTHR24960">
    <property type="entry name" value="PHOTOSYSTEM I IRON-SULFUR CENTER-RELATED"/>
    <property type="match status" value="1"/>
</dbReference>
<dbReference type="Pfam" id="PF14697">
    <property type="entry name" value="Fer4_21"/>
    <property type="match status" value="1"/>
</dbReference>
<dbReference type="SUPFAM" id="SSF54862">
    <property type="entry name" value="4Fe-4S ferredoxins"/>
    <property type="match status" value="1"/>
</dbReference>
<dbReference type="PROSITE" id="PS00198">
    <property type="entry name" value="4FE4S_FER_1"/>
    <property type="match status" value="2"/>
</dbReference>
<dbReference type="PROSITE" id="PS51379">
    <property type="entry name" value="4FE4S_FER_2"/>
    <property type="match status" value="2"/>
</dbReference>
<gene>
    <name evidence="2" type="primary">psaC</name>
</gene>